<sequence length="294" mass="32204">MTARKPGWLRVNVPGGARYQQVRDTVKGLALHTVCEEAHCPNVAECWGGGTATVMLMGDVCTRGCRFCNVKTDAHPPPLDPDEPRHLAEAIAELGLDYIVVTSVDRDDLPDGGAGHFADAIRRLKDIPQLLVEVLTPDFRGDAEAVRTVGRARPDVFANNLETVRRLTPVVRDLKAGYDQTLAVLARMKREFPRIVTKSSIMVGLGETEDELLEAMGDLRAAGVEILTLGQYLRPSAWHLPVVEYVKPEKFAAWREAGLGLGFRYVASGPLVRSSYRAAELFLRGELASRPPGP</sequence>
<gene>
    <name evidence="1" type="primary">lipA</name>
    <name type="ordered locus">Anae109_1992</name>
</gene>
<reference key="1">
    <citation type="journal article" date="2015" name="Genome Announc.">
        <title>Complete genome sequence of Anaeromyxobacter sp. Fw109-5, an anaerobic, metal-reducing bacterium isolated from a contaminated subsurface environment.</title>
        <authorList>
            <person name="Hwang C."/>
            <person name="Copeland A."/>
            <person name="Lucas S."/>
            <person name="Lapidus A."/>
            <person name="Barry K."/>
            <person name="Glavina Del Rio T."/>
            <person name="Dalin E."/>
            <person name="Tice H."/>
            <person name="Pitluck S."/>
            <person name="Sims D."/>
            <person name="Brettin T."/>
            <person name="Bruce D.C."/>
            <person name="Detter J.C."/>
            <person name="Han C.S."/>
            <person name="Schmutz J."/>
            <person name="Larimer F.W."/>
            <person name="Land M.L."/>
            <person name="Hauser L.J."/>
            <person name="Kyrpides N."/>
            <person name="Lykidis A."/>
            <person name="Richardson P."/>
            <person name="Belieav A."/>
            <person name="Sanford R.A."/>
            <person name="Loeffler F.E."/>
            <person name="Fields M.W."/>
        </authorList>
    </citation>
    <scope>NUCLEOTIDE SEQUENCE [LARGE SCALE GENOMIC DNA]</scope>
    <source>
        <strain>Fw109-5</strain>
    </source>
</reference>
<feature type="chain" id="PRO_0000325227" description="Lipoyl synthase">
    <location>
        <begin position="1"/>
        <end position="294"/>
    </location>
</feature>
<feature type="domain" description="Radical SAM core" evidence="2">
    <location>
        <begin position="46"/>
        <end position="264"/>
    </location>
</feature>
<feature type="binding site" evidence="1">
    <location>
        <position position="35"/>
    </location>
    <ligand>
        <name>[4Fe-4S] cluster</name>
        <dbReference type="ChEBI" id="CHEBI:49883"/>
        <label>1</label>
    </ligand>
</feature>
<feature type="binding site" evidence="1">
    <location>
        <position position="40"/>
    </location>
    <ligand>
        <name>[4Fe-4S] cluster</name>
        <dbReference type="ChEBI" id="CHEBI:49883"/>
        <label>1</label>
    </ligand>
</feature>
<feature type="binding site" evidence="1">
    <location>
        <position position="46"/>
    </location>
    <ligand>
        <name>[4Fe-4S] cluster</name>
        <dbReference type="ChEBI" id="CHEBI:49883"/>
        <label>1</label>
    </ligand>
</feature>
<feature type="binding site" evidence="1">
    <location>
        <position position="61"/>
    </location>
    <ligand>
        <name>[4Fe-4S] cluster</name>
        <dbReference type="ChEBI" id="CHEBI:49883"/>
        <label>2</label>
        <note>4Fe-4S-S-AdoMet</note>
    </ligand>
</feature>
<feature type="binding site" evidence="1">
    <location>
        <position position="65"/>
    </location>
    <ligand>
        <name>[4Fe-4S] cluster</name>
        <dbReference type="ChEBI" id="CHEBI:49883"/>
        <label>2</label>
        <note>4Fe-4S-S-AdoMet</note>
    </ligand>
</feature>
<feature type="binding site" evidence="1">
    <location>
        <position position="68"/>
    </location>
    <ligand>
        <name>[4Fe-4S] cluster</name>
        <dbReference type="ChEBI" id="CHEBI:49883"/>
        <label>2</label>
        <note>4Fe-4S-S-AdoMet</note>
    </ligand>
</feature>
<feature type="binding site" evidence="1">
    <location>
        <position position="275"/>
    </location>
    <ligand>
        <name>[4Fe-4S] cluster</name>
        <dbReference type="ChEBI" id="CHEBI:49883"/>
        <label>1</label>
    </ligand>
</feature>
<protein>
    <recommendedName>
        <fullName evidence="1">Lipoyl synthase</fullName>
        <ecNumber evidence="1">2.8.1.8</ecNumber>
    </recommendedName>
    <alternativeName>
        <fullName evidence="1">Lip-syn</fullName>
        <shortName evidence="1">LS</shortName>
    </alternativeName>
    <alternativeName>
        <fullName evidence="1">Lipoate synthase</fullName>
    </alternativeName>
    <alternativeName>
        <fullName evidence="1">Lipoic acid synthase</fullName>
    </alternativeName>
    <alternativeName>
        <fullName evidence="1">Sulfur insertion protein LipA</fullName>
    </alternativeName>
</protein>
<accession>A7HBU9</accession>
<name>LIPA_ANADF</name>
<dbReference type="EC" id="2.8.1.8" evidence="1"/>
<dbReference type="EMBL" id="CP000769">
    <property type="protein sequence ID" value="ABS26195.1"/>
    <property type="molecule type" value="Genomic_DNA"/>
</dbReference>
<dbReference type="RefSeq" id="WP_012096774.1">
    <property type="nucleotide sequence ID" value="NC_009675.1"/>
</dbReference>
<dbReference type="SMR" id="A7HBU9"/>
<dbReference type="STRING" id="404589.Anae109_1992"/>
<dbReference type="KEGG" id="afw:Anae109_1992"/>
<dbReference type="eggNOG" id="COG0320">
    <property type="taxonomic scope" value="Bacteria"/>
</dbReference>
<dbReference type="HOGENOM" id="CLU_033144_2_0_7"/>
<dbReference type="UniPathway" id="UPA00538">
    <property type="reaction ID" value="UER00593"/>
</dbReference>
<dbReference type="Proteomes" id="UP000006382">
    <property type="component" value="Chromosome"/>
</dbReference>
<dbReference type="GO" id="GO:0005737">
    <property type="term" value="C:cytoplasm"/>
    <property type="evidence" value="ECO:0007669"/>
    <property type="project" value="UniProtKB-SubCell"/>
</dbReference>
<dbReference type="GO" id="GO:0051539">
    <property type="term" value="F:4 iron, 4 sulfur cluster binding"/>
    <property type="evidence" value="ECO:0007669"/>
    <property type="project" value="UniProtKB-UniRule"/>
</dbReference>
<dbReference type="GO" id="GO:0016992">
    <property type="term" value="F:lipoate synthase activity"/>
    <property type="evidence" value="ECO:0007669"/>
    <property type="project" value="UniProtKB-UniRule"/>
</dbReference>
<dbReference type="GO" id="GO:0046872">
    <property type="term" value="F:metal ion binding"/>
    <property type="evidence" value="ECO:0007669"/>
    <property type="project" value="UniProtKB-KW"/>
</dbReference>
<dbReference type="CDD" id="cd01335">
    <property type="entry name" value="Radical_SAM"/>
    <property type="match status" value="1"/>
</dbReference>
<dbReference type="Gene3D" id="3.20.20.70">
    <property type="entry name" value="Aldolase class I"/>
    <property type="match status" value="1"/>
</dbReference>
<dbReference type="HAMAP" id="MF_00206">
    <property type="entry name" value="Lipoyl_synth"/>
    <property type="match status" value="1"/>
</dbReference>
<dbReference type="InterPro" id="IPR013785">
    <property type="entry name" value="Aldolase_TIM"/>
</dbReference>
<dbReference type="InterPro" id="IPR006638">
    <property type="entry name" value="Elp3/MiaA/NifB-like_rSAM"/>
</dbReference>
<dbReference type="InterPro" id="IPR031691">
    <property type="entry name" value="LIAS_N"/>
</dbReference>
<dbReference type="InterPro" id="IPR003698">
    <property type="entry name" value="Lipoyl_synth"/>
</dbReference>
<dbReference type="InterPro" id="IPR007197">
    <property type="entry name" value="rSAM"/>
</dbReference>
<dbReference type="NCBIfam" id="TIGR00510">
    <property type="entry name" value="lipA"/>
    <property type="match status" value="1"/>
</dbReference>
<dbReference type="NCBIfam" id="NF004019">
    <property type="entry name" value="PRK05481.1"/>
    <property type="match status" value="1"/>
</dbReference>
<dbReference type="NCBIfam" id="NF009544">
    <property type="entry name" value="PRK12928.1"/>
    <property type="match status" value="1"/>
</dbReference>
<dbReference type="PANTHER" id="PTHR10949">
    <property type="entry name" value="LIPOYL SYNTHASE"/>
    <property type="match status" value="1"/>
</dbReference>
<dbReference type="PANTHER" id="PTHR10949:SF0">
    <property type="entry name" value="LIPOYL SYNTHASE, MITOCHONDRIAL"/>
    <property type="match status" value="1"/>
</dbReference>
<dbReference type="Pfam" id="PF16881">
    <property type="entry name" value="LIAS_N"/>
    <property type="match status" value="1"/>
</dbReference>
<dbReference type="Pfam" id="PF04055">
    <property type="entry name" value="Radical_SAM"/>
    <property type="match status" value="1"/>
</dbReference>
<dbReference type="PIRSF" id="PIRSF005963">
    <property type="entry name" value="Lipoyl_synth"/>
    <property type="match status" value="1"/>
</dbReference>
<dbReference type="SFLD" id="SFLDF00271">
    <property type="entry name" value="lipoyl_synthase"/>
    <property type="match status" value="1"/>
</dbReference>
<dbReference type="SFLD" id="SFLDG01058">
    <property type="entry name" value="lipoyl_synthase_like"/>
    <property type="match status" value="1"/>
</dbReference>
<dbReference type="SMART" id="SM00729">
    <property type="entry name" value="Elp3"/>
    <property type="match status" value="1"/>
</dbReference>
<dbReference type="SUPFAM" id="SSF102114">
    <property type="entry name" value="Radical SAM enzymes"/>
    <property type="match status" value="1"/>
</dbReference>
<dbReference type="PROSITE" id="PS51918">
    <property type="entry name" value="RADICAL_SAM"/>
    <property type="match status" value="1"/>
</dbReference>
<comment type="function">
    <text evidence="1">Catalyzes the radical-mediated insertion of two sulfur atoms into the C-6 and C-8 positions of the octanoyl moiety bound to the lipoyl domains of lipoate-dependent enzymes, thereby converting the octanoylated domains into lipoylated derivatives.</text>
</comment>
<comment type="catalytic activity">
    <reaction evidence="1">
        <text>[[Fe-S] cluster scaffold protein carrying a second [4Fe-4S](2+) cluster] + N(6)-octanoyl-L-lysyl-[protein] + 2 oxidized [2Fe-2S]-[ferredoxin] + 2 S-adenosyl-L-methionine + 4 H(+) = [[Fe-S] cluster scaffold protein] + N(6)-[(R)-dihydrolipoyl]-L-lysyl-[protein] + 4 Fe(3+) + 2 hydrogen sulfide + 2 5'-deoxyadenosine + 2 L-methionine + 2 reduced [2Fe-2S]-[ferredoxin]</text>
        <dbReference type="Rhea" id="RHEA:16585"/>
        <dbReference type="Rhea" id="RHEA-COMP:9928"/>
        <dbReference type="Rhea" id="RHEA-COMP:10000"/>
        <dbReference type="Rhea" id="RHEA-COMP:10001"/>
        <dbReference type="Rhea" id="RHEA-COMP:10475"/>
        <dbReference type="Rhea" id="RHEA-COMP:14568"/>
        <dbReference type="Rhea" id="RHEA-COMP:14569"/>
        <dbReference type="ChEBI" id="CHEBI:15378"/>
        <dbReference type="ChEBI" id="CHEBI:17319"/>
        <dbReference type="ChEBI" id="CHEBI:29034"/>
        <dbReference type="ChEBI" id="CHEBI:29919"/>
        <dbReference type="ChEBI" id="CHEBI:33722"/>
        <dbReference type="ChEBI" id="CHEBI:33737"/>
        <dbReference type="ChEBI" id="CHEBI:33738"/>
        <dbReference type="ChEBI" id="CHEBI:57844"/>
        <dbReference type="ChEBI" id="CHEBI:59789"/>
        <dbReference type="ChEBI" id="CHEBI:78809"/>
        <dbReference type="ChEBI" id="CHEBI:83100"/>
        <dbReference type="EC" id="2.8.1.8"/>
    </reaction>
</comment>
<comment type="cofactor">
    <cofactor evidence="1">
        <name>[4Fe-4S] cluster</name>
        <dbReference type="ChEBI" id="CHEBI:49883"/>
    </cofactor>
    <text evidence="1">Binds 2 [4Fe-4S] clusters per subunit. One cluster is coordinated with 3 cysteines and an exchangeable S-adenosyl-L-methionine.</text>
</comment>
<comment type="pathway">
    <text evidence="1">Protein modification; protein lipoylation via endogenous pathway; protein N(6)-(lipoyl)lysine from octanoyl-[acyl-carrier-protein]: step 2/2.</text>
</comment>
<comment type="subcellular location">
    <subcellularLocation>
        <location evidence="1">Cytoplasm</location>
    </subcellularLocation>
</comment>
<comment type="similarity">
    <text evidence="1">Belongs to the radical SAM superfamily. Lipoyl synthase family.</text>
</comment>
<evidence type="ECO:0000255" key="1">
    <source>
        <dbReference type="HAMAP-Rule" id="MF_00206"/>
    </source>
</evidence>
<evidence type="ECO:0000255" key="2">
    <source>
        <dbReference type="PROSITE-ProRule" id="PRU01266"/>
    </source>
</evidence>
<organism>
    <name type="scientific">Anaeromyxobacter sp. (strain Fw109-5)</name>
    <dbReference type="NCBI Taxonomy" id="404589"/>
    <lineage>
        <taxon>Bacteria</taxon>
        <taxon>Pseudomonadati</taxon>
        <taxon>Myxococcota</taxon>
        <taxon>Myxococcia</taxon>
        <taxon>Myxococcales</taxon>
        <taxon>Cystobacterineae</taxon>
        <taxon>Anaeromyxobacteraceae</taxon>
        <taxon>Anaeromyxobacter</taxon>
    </lineage>
</organism>
<keyword id="KW-0004">4Fe-4S</keyword>
<keyword id="KW-0963">Cytoplasm</keyword>
<keyword id="KW-0408">Iron</keyword>
<keyword id="KW-0411">Iron-sulfur</keyword>
<keyword id="KW-0479">Metal-binding</keyword>
<keyword id="KW-1185">Reference proteome</keyword>
<keyword id="KW-0949">S-adenosyl-L-methionine</keyword>
<keyword id="KW-0808">Transferase</keyword>
<proteinExistence type="inferred from homology"/>